<evidence type="ECO:0000255" key="1"/>
<evidence type="ECO:0000305" key="2"/>
<evidence type="ECO:0007829" key="3">
    <source>
        <dbReference type="PDB" id="2GSL"/>
    </source>
</evidence>
<name>MRNCL_FUSNN</name>
<organism>
    <name type="scientific">Fusobacterium nucleatum subsp. nucleatum (strain ATCC 25586 / DSM 15643 / BCRC 10681 / CIP 101130 / JCM 8532 / KCTC 2640 / LMG 13131 / VPI 4355)</name>
    <dbReference type="NCBI Taxonomy" id="190304"/>
    <lineage>
        <taxon>Bacteria</taxon>
        <taxon>Fusobacteriati</taxon>
        <taxon>Fusobacteriota</taxon>
        <taxon>Fusobacteriia</taxon>
        <taxon>Fusobacteriales</taxon>
        <taxon>Fusobacteriaceae</taxon>
        <taxon>Fusobacterium</taxon>
    </lineage>
</organism>
<proteinExistence type="evidence at protein level"/>
<keyword id="KW-0002">3D-structure</keyword>
<keyword id="KW-0255">Endonuclease</keyword>
<keyword id="KW-0378">Hydrolase</keyword>
<keyword id="KW-0540">Nuclease</keyword>
<keyword id="KW-1185">Reference proteome</keyword>
<gene>
    <name type="primary">mrnCL</name>
    <name type="ordered locus">FN1578</name>
</gene>
<comment type="function">
    <text>Might be a ribonuclease involved in RNA processing.</text>
</comment>
<comment type="similarity">
    <text evidence="2">Belongs to the MrnC RNase family.</text>
</comment>
<comment type="caution">
    <text evidence="2">Strongly resembles the MrnC Mini-3 enzyme, but is missing a highly conserved, possibly catalytically important site at position 72.</text>
</comment>
<dbReference type="EMBL" id="AE009951">
    <property type="protein sequence ID" value="AAL93693.1"/>
    <property type="molecule type" value="Genomic_DNA"/>
</dbReference>
<dbReference type="RefSeq" id="NP_602394.1">
    <property type="nucleotide sequence ID" value="NC_003454.1"/>
</dbReference>
<dbReference type="RefSeq" id="WP_005902248.1">
    <property type="nucleotide sequence ID" value="NZ_OZ209243.1"/>
</dbReference>
<dbReference type="PDB" id="2GSL">
    <property type="method" value="X-ray"/>
    <property type="resolution" value="2.60 A"/>
    <property type="chains" value="A/B/C/D/E/F=1-129"/>
</dbReference>
<dbReference type="PDBsum" id="2GSL"/>
<dbReference type="SMR" id="Q8RIL0"/>
<dbReference type="FunCoup" id="Q8RIL0">
    <property type="interactions" value="111"/>
</dbReference>
<dbReference type="STRING" id="190304.FN1578"/>
<dbReference type="PaxDb" id="190304-FN1578"/>
<dbReference type="EnsemblBacteria" id="AAL93693">
    <property type="protein sequence ID" value="AAL93693"/>
    <property type="gene ID" value="FN1578"/>
</dbReference>
<dbReference type="KEGG" id="fnu:FN1578"/>
<dbReference type="PATRIC" id="fig|190304.8.peg.70"/>
<dbReference type="eggNOG" id="COG1939">
    <property type="taxonomic scope" value="Bacteria"/>
</dbReference>
<dbReference type="HOGENOM" id="CLU_091169_2_1_0"/>
<dbReference type="InParanoid" id="Q8RIL0"/>
<dbReference type="BioCyc" id="FNUC190304:G1FZS-82-MONOMER"/>
<dbReference type="EvolutionaryTrace" id="Q8RIL0"/>
<dbReference type="Proteomes" id="UP000002521">
    <property type="component" value="Chromosome"/>
</dbReference>
<dbReference type="GO" id="GO:0004525">
    <property type="term" value="F:ribonuclease III activity"/>
    <property type="evidence" value="ECO:0007669"/>
    <property type="project" value="InterPro"/>
</dbReference>
<dbReference type="GO" id="GO:0006396">
    <property type="term" value="P:RNA processing"/>
    <property type="evidence" value="ECO:0007669"/>
    <property type="project" value="InterPro"/>
</dbReference>
<dbReference type="Gene3D" id="1.10.1520.10">
    <property type="entry name" value="Ribonuclease III domain"/>
    <property type="match status" value="1"/>
</dbReference>
<dbReference type="InterPro" id="IPR008226">
    <property type="entry name" value="Mini3_fam"/>
</dbReference>
<dbReference type="InterPro" id="IPR000999">
    <property type="entry name" value="RNase_III_dom"/>
</dbReference>
<dbReference type="InterPro" id="IPR036389">
    <property type="entry name" value="RNase_III_sf"/>
</dbReference>
<dbReference type="PANTHER" id="PTHR34276">
    <property type="entry name" value="MINI-RIBONUCLEASE 3"/>
    <property type="match status" value="1"/>
</dbReference>
<dbReference type="PANTHER" id="PTHR34276:SF1">
    <property type="entry name" value="MINI-RIBONUCLEASE 3"/>
    <property type="match status" value="1"/>
</dbReference>
<dbReference type="Pfam" id="PF00636">
    <property type="entry name" value="Ribonuclease_3"/>
    <property type="match status" value="1"/>
</dbReference>
<dbReference type="PIRSF" id="PIRSF005520">
    <property type="entry name" value="UCP005520"/>
    <property type="match status" value="1"/>
</dbReference>
<dbReference type="SUPFAM" id="SSF69065">
    <property type="entry name" value="RNase III domain-like"/>
    <property type="match status" value="1"/>
</dbReference>
<accession>Q8RIL0</accession>
<feature type="chain" id="PRO_0000415998" description="Mini-ribonuclease 3-like protein">
    <location>
        <begin position="1"/>
        <end position="129"/>
    </location>
</feature>
<feature type="active site" evidence="1">
    <location>
        <position position="23"/>
    </location>
</feature>
<feature type="turn" evidence="3">
    <location>
        <begin position="9"/>
        <end position="11"/>
    </location>
</feature>
<feature type="helix" evidence="3">
    <location>
        <begin position="15"/>
        <end position="34"/>
    </location>
</feature>
<feature type="helix" evidence="3">
    <location>
        <begin position="41"/>
        <end position="52"/>
    </location>
</feature>
<feature type="helix" evidence="3">
    <location>
        <begin position="54"/>
        <end position="64"/>
    </location>
</feature>
<feature type="helix" evidence="3">
    <location>
        <begin position="65"/>
        <end position="67"/>
    </location>
</feature>
<feature type="helix" evidence="3">
    <location>
        <begin position="70"/>
        <end position="80"/>
    </location>
</feature>
<feature type="strand" evidence="3">
    <location>
        <begin position="89"/>
        <end position="91"/>
    </location>
</feature>
<feature type="helix" evidence="3">
    <location>
        <begin position="93"/>
        <end position="111"/>
    </location>
</feature>
<feature type="helix" evidence="3">
    <location>
        <begin position="115"/>
        <end position="127"/>
    </location>
</feature>
<protein>
    <recommendedName>
        <fullName>Mini-ribonuclease 3-like protein</fullName>
    </recommendedName>
</protein>
<sequence>MDNVDFSKDIRDYSGLELAFLGDAIWELEIRKYYLQFGYNIPTLNKYVKAKVNAKYQSLIYKKIINDLDEEFKVIGKRAKNSNIKTFPRSCTVMEYKEATALEAIIGAMYLLKKEEEIKKIINIVIKGE</sequence>
<reference key="1">
    <citation type="journal article" date="2002" name="J. Bacteriol.">
        <title>Genome sequence and analysis of the oral bacterium Fusobacterium nucleatum strain ATCC 25586.</title>
        <authorList>
            <person name="Kapatral V."/>
            <person name="Anderson I."/>
            <person name="Ivanova N."/>
            <person name="Reznik G."/>
            <person name="Los T."/>
            <person name="Lykidis A."/>
            <person name="Bhattacharyya A."/>
            <person name="Bartman A."/>
            <person name="Gardner W."/>
            <person name="Grechkin G."/>
            <person name="Zhu L."/>
            <person name="Vasieva O."/>
            <person name="Chu L."/>
            <person name="Kogan Y."/>
            <person name="Chaga O."/>
            <person name="Goltsman E."/>
            <person name="Bernal A."/>
            <person name="Larsen N."/>
            <person name="D'Souza M."/>
            <person name="Walunas T."/>
            <person name="Pusch G."/>
            <person name="Haselkorn R."/>
            <person name="Fonstein M."/>
            <person name="Kyrpides N.C."/>
            <person name="Overbeek R."/>
        </authorList>
    </citation>
    <scope>NUCLEOTIDE SEQUENCE [LARGE SCALE GENOMIC DNA]</scope>
    <source>
        <strain>ATCC 25586 / DSM 15643 / BCRC 10681 / CIP 101130 / JCM 8532 / KCTC 2640 / LMG 13131 / VPI 4355</strain>
    </source>
</reference>
<reference key="2">
    <citation type="submission" date="2006-04" db="PDB data bank">
        <title>Crystal structure of the hypothetical protein (FN1578) from Fusobacterium nucleatum, NESG target NR1.</title>
        <authorList>
            <person name="Forouhar F."/>
            <person name="Su M."/>
            <person name="Jayaraman S."/>
            <person name="Conover K."/>
            <person name="Janjua H."/>
            <person name="Xiao R."/>
            <person name="Acton T.B."/>
            <person name="Montelione G.T."/>
            <person name="Tong L."/>
            <person name="Hunt J.F."/>
        </authorList>
    </citation>
    <scope>X-RAY CRYSTALLOGRAPHY (2.60 ANGSTROMS)</scope>
    <source>
        <strain>ATCC 25586 / DSM 15643 / BCRC 10681 / CIP 101130 / JCM 8532 / KCTC 2640 / LMG 13131 / VPI 4355</strain>
    </source>
</reference>